<feature type="chain" id="PRO_1000114236" description="Cell division topological specificity factor">
    <location>
        <begin position="1"/>
        <end position="97"/>
    </location>
</feature>
<keyword id="KW-0131">Cell cycle</keyword>
<keyword id="KW-0132">Cell division</keyword>
<keyword id="KW-1185">Reference proteome</keyword>
<evidence type="ECO:0000255" key="1">
    <source>
        <dbReference type="HAMAP-Rule" id="MF_00262"/>
    </source>
</evidence>
<dbReference type="EMBL" id="CP000613">
    <property type="protein sequence ID" value="ACJ00859.1"/>
    <property type="molecule type" value="Genomic_DNA"/>
</dbReference>
<dbReference type="RefSeq" id="WP_012568637.1">
    <property type="nucleotide sequence ID" value="NC_011420.2"/>
</dbReference>
<dbReference type="SMR" id="B6IX35"/>
<dbReference type="STRING" id="414684.RC1_3501"/>
<dbReference type="KEGG" id="rce:RC1_3501"/>
<dbReference type="eggNOG" id="COG0851">
    <property type="taxonomic scope" value="Bacteria"/>
</dbReference>
<dbReference type="HOGENOM" id="CLU_137929_2_1_5"/>
<dbReference type="OrthoDB" id="9802655at2"/>
<dbReference type="Proteomes" id="UP000001591">
    <property type="component" value="Chromosome"/>
</dbReference>
<dbReference type="GO" id="GO:0051301">
    <property type="term" value="P:cell division"/>
    <property type="evidence" value="ECO:0007669"/>
    <property type="project" value="UniProtKB-KW"/>
</dbReference>
<dbReference type="GO" id="GO:0032955">
    <property type="term" value="P:regulation of division septum assembly"/>
    <property type="evidence" value="ECO:0007669"/>
    <property type="project" value="InterPro"/>
</dbReference>
<dbReference type="FunFam" id="3.30.1070.10:FF:000001">
    <property type="entry name" value="Cell division topological specificity factor"/>
    <property type="match status" value="1"/>
</dbReference>
<dbReference type="Gene3D" id="3.30.1070.10">
    <property type="entry name" value="Cell division topological specificity factor MinE"/>
    <property type="match status" value="1"/>
</dbReference>
<dbReference type="HAMAP" id="MF_00262">
    <property type="entry name" value="MinE"/>
    <property type="match status" value="1"/>
</dbReference>
<dbReference type="InterPro" id="IPR005527">
    <property type="entry name" value="MinE"/>
</dbReference>
<dbReference type="InterPro" id="IPR036707">
    <property type="entry name" value="MinE_sf"/>
</dbReference>
<dbReference type="NCBIfam" id="TIGR01215">
    <property type="entry name" value="minE"/>
    <property type="match status" value="1"/>
</dbReference>
<dbReference type="NCBIfam" id="NF001422">
    <property type="entry name" value="PRK00296.1"/>
    <property type="match status" value="1"/>
</dbReference>
<dbReference type="Pfam" id="PF03776">
    <property type="entry name" value="MinE"/>
    <property type="match status" value="1"/>
</dbReference>
<dbReference type="SUPFAM" id="SSF55229">
    <property type="entry name" value="Cell division protein MinE topological specificity domain"/>
    <property type="match status" value="1"/>
</dbReference>
<comment type="function">
    <text evidence="1">Prevents the cell division inhibition by proteins MinC and MinD at internal division sites while permitting inhibition at polar sites. This ensures cell division at the proper site by restricting the formation of a division septum at the midpoint of the long axis of the cell.</text>
</comment>
<comment type="similarity">
    <text evidence="1">Belongs to the MinE family.</text>
</comment>
<protein>
    <recommendedName>
        <fullName evidence="1">Cell division topological specificity factor</fullName>
    </recommendedName>
</protein>
<sequence length="97" mass="10713">MNLMDFFRRNKEPTATTAKDRLQIVLAHERADRNAPDFLPALQKELLAVIKKYVPIDDDKVAVKLERESGCSMLEVNVELPAPTKGAPRQPAATAAG</sequence>
<accession>B6IX35</accession>
<reference key="1">
    <citation type="submission" date="2007-03" db="EMBL/GenBank/DDBJ databases">
        <title>Genome sequence of Rhodospirillum centenum.</title>
        <authorList>
            <person name="Touchman J.W."/>
            <person name="Bauer C."/>
            <person name="Blankenship R.E."/>
        </authorList>
    </citation>
    <scope>NUCLEOTIDE SEQUENCE [LARGE SCALE GENOMIC DNA]</scope>
    <source>
        <strain>ATCC 51521 / SW</strain>
    </source>
</reference>
<name>MINE_RHOCS</name>
<proteinExistence type="inferred from homology"/>
<gene>
    <name evidence="1" type="primary">minE</name>
    <name type="ordered locus">RC1_3501</name>
</gene>
<organism>
    <name type="scientific">Rhodospirillum centenum (strain ATCC 51521 / SW)</name>
    <dbReference type="NCBI Taxonomy" id="414684"/>
    <lineage>
        <taxon>Bacteria</taxon>
        <taxon>Pseudomonadati</taxon>
        <taxon>Pseudomonadota</taxon>
        <taxon>Alphaproteobacteria</taxon>
        <taxon>Rhodospirillales</taxon>
        <taxon>Rhodospirillaceae</taxon>
        <taxon>Rhodospirillum</taxon>
    </lineage>
</organism>